<evidence type="ECO:0000255" key="1">
    <source>
        <dbReference type="HAMAP-Rule" id="MF_01539"/>
    </source>
</evidence>
<dbReference type="EC" id="6.3.4.-" evidence="1"/>
<dbReference type="EMBL" id="CR936503">
    <property type="protein sequence ID" value="CAI55690.1"/>
    <property type="molecule type" value="Genomic_DNA"/>
</dbReference>
<dbReference type="RefSeq" id="WP_011375081.1">
    <property type="nucleotide sequence ID" value="NC_007576.1"/>
</dbReference>
<dbReference type="SMR" id="Q38VU3"/>
<dbReference type="STRING" id="314315.LCA_1387"/>
<dbReference type="KEGG" id="lsa:LCA_1387"/>
<dbReference type="eggNOG" id="COG1323">
    <property type="taxonomic scope" value="Bacteria"/>
</dbReference>
<dbReference type="HOGENOM" id="CLU_038915_0_2_9"/>
<dbReference type="OrthoDB" id="9769796at2"/>
<dbReference type="Proteomes" id="UP000002707">
    <property type="component" value="Chromosome"/>
</dbReference>
<dbReference type="GO" id="GO:0005737">
    <property type="term" value="C:cytoplasm"/>
    <property type="evidence" value="ECO:0007669"/>
    <property type="project" value="UniProtKB-SubCell"/>
</dbReference>
<dbReference type="GO" id="GO:0005524">
    <property type="term" value="F:ATP binding"/>
    <property type="evidence" value="ECO:0007669"/>
    <property type="project" value="UniProtKB-KW"/>
</dbReference>
<dbReference type="GO" id="GO:0016879">
    <property type="term" value="F:ligase activity, forming carbon-nitrogen bonds"/>
    <property type="evidence" value="ECO:0007669"/>
    <property type="project" value="UniProtKB-UniRule"/>
</dbReference>
<dbReference type="GO" id="GO:0000049">
    <property type="term" value="F:tRNA binding"/>
    <property type="evidence" value="ECO:0007669"/>
    <property type="project" value="UniProtKB-KW"/>
</dbReference>
<dbReference type="GO" id="GO:0006400">
    <property type="term" value="P:tRNA modification"/>
    <property type="evidence" value="ECO:0007669"/>
    <property type="project" value="UniProtKB-UniRule"/>
</dbReference>
<dbReference type="Gene3D" id="3.40.50.620">
    <property type="entry name" value="HUPs"/>
    <property type="match status" value="1"/>
</dbReference>
<dbReference type="HAMAP" id="MF_01539">
    <property type="entry name" value="TmcAL"/>
    <property type="match status" value="1"/>
</dbReference>
<dbReference type="InterPro" id="IPR014729">
    <property type="entry name" value="Rossmann-like_a/b/a_fold"/>
</dbReference>
<dbReference type="InterPro" id="IPR008513">
    <property type="entry name" value="tRNA(Met)_cyd_acetate_ligase"/>
</dbReference>
<dbReference type="NCBIfam" id="NF010191">
    <property type="entry name" value="PRK13670.1"/>
    <property type="match status" value="1"/>
</dbReference>
<dbReference type="PANTHER" id="PTHR37825">
    <property type="entry name" value="TRNA(MET) CYTIDINE ACETATE LIGASE"/>
    <property type="match status" value="1"/>
</dbReference>
<dbReference type="PANTHER" id="PTHR37825:SF1">
    <property type="entry name" value="TRNA(MET) CYTIDINE ACETATE LIGASE"/>
    <property type="match status" value="1"/>
</dbReference>
<dbReference type="Pfam" id="PF05636">
    <property type="entry name" value="HIGH_NTase1"/>
    <property type="match status" value="1"/>
</dbReference>
<dbReference type="SUPFAM" id="SSF52374">
    <property type="entry name" value="Nucleotidylyl transferase"/>
    <property type="match status" value="1"/>
</dbReference>
<feature type="chain" id="PRO_0000300176" description="tRNA(Met) cytidine acetate ligase">
    <location>
        <begin position="1"/>
        <end position="391"/>
    </location>
</feature>
<feature type="binding site" evidence="1">
    <location>
        <begin position="7"/>
        <end position="20"/>
    </location>
    <ligand>
        <name>ATP</name>
        <dbReference type="ChEBI" id="CHEBI:30616"/>
    </ligand>
</feature>
<feature type="binding site" evidence="1">
    <location>
        <position position="101"/>
    </location>
    <ligand>
        <name>ATP</name>
        <dbReference type="ChEBI" id="CHEBI:30616"/>
    </ligand>
</feature>
<feature type="binding site" evidence="1">
    <location>
        <position position="153"/>
    </location>
    <ligand>
        <name>ATP</name>
        <dbReference type="ChEBI" id="CHEBI:30616"/>
    </ligand>
</feature>
<feature type="binding site" evidence="1">
    <location>
        <position position="178"/>
    </location>
    <ligand>
        <name>ATP</name>
        <dbReference type="ChEBI" id="CHEBI:30616"/>
    </ligand>
</feature>
<accession>Q38VU3</accession>
<reference key="1">
    <citation type="journal article" date="2005" name="Nat. Biotechnol.">
        <title>The complete genome sequence of the meat-borne lactic acid bacterium Lactobacillus sakei 23K.</title>
        <authorList>
            <person name="Chaillou S."/>
            <person name="Champomier-Verges M.-C."/>
            <person name="Cornet M."/>
            <person name="Crutz-Le Coq A.-M."/>
            <person name="Dudez A.-M."/>
            <person name="Martin V."/>
            <person name="Beaufils S."/>
            <person name="Darbon-Rongere E."/>
            <person name="Bossy R."/>
            <person name="Loux V."/>
            <person name="Zagorec M."/>
        </authorList>
    </citation>
    <scope>NUCLEOTIDE SEQUENCE [LARGE SCALE GENOMIC DNA]</scope>
    <source>
        <strain>23K</strain>
    </source>
</reference>
<organism>
    <name type="scientific">Latilactobacillus sakei subsp. sakei (strain 23K)</name>
    <name type="common">Lactobacillus sakei subsp. sakei</name>
    <dbReference type="NCBI Taxonomy" id="314315"/>
    <lineage>
        <taxon>Bacteria</taxon>
        <taxon>Bacillati</taxon>
        <taxon>Bacillota</taxon>
        <taxon>Bacilli</taxon>
        <taxon>Lactobacillales</taxon>
        <taxon>Lactobacillaceae</taxon>
        <taxon>Latilactobacillus</taxon>
    </lineage>
</organism>
<protein>
    <recommendedName>
        <fullName evidence="1">tRNA(Met) cytidine acetate ligase</fullName>
        <ecNumber evidence="1">6.3.4.-</ecNumber>
    </recommendedName>
</protein>
<proteinExistence type="inferred from homology"/>
<sequence>MRITGIIAEYNPLHNGHIYQLQQARQQSQADLVIVCMSGNYVQRGQAALLDKWTRAELALQNGADMVVELPFVSAVQPADRFATGAVQLLAALGCQTIAFGSEQPTFDYQQAGQQIIDLPEQSAAFVDYQKTYATQLNEFYQEQLSLQIDQPNHLLGISYAVANARLAQPLNLLAIKREQAQHGDQTVSTAPYASASAIRQVVTQGTALAALQHVVPAGTLAALADSTLLTEDQLWPLLKYRIESLSLAQLRQVYQMSEGLEYRFKKVIHKANSYTELLQALKTKRYTYARLQRVCLYVLLNIQPADIQQGLQRTYIRLLGFNEIGQQHLHQLKKTTDLPIISKVSAKMGAETGLLGLEVRVDRLCEQFGWQSQNFARQPIFYHGKDEAHC</sequence>
<name>TMCAL_LATSS</name>
<gene>
    <name evidence="1" type="primary">tmcAL</name>
    <name type="ordered locus">LCA_1387</name>
</gene>
<comment type="function">
    <text evidence="1">Catalyzes the formation of N(4)-acetylcytidine (ac(4)C) at the wobble position of elongator tRNA(Met), using acetate and ATP as substrates. First activates an acetate ion to form acetyladenylate (Ac-AMP) and then transfers the acetyl group to tRNA to form ac(4)C34.</text>
</comment>
<comment type="catalytic activity">
    <reaction evidence="1">
        <text>cytidine(34) in elongator tRNA(Met) + acetate + ATP = N(4)-acetylcytidine(34) in elongator tRNA(Met) + AMP + diphosphate</text>
        <dbReference type="Rhea" id="RHEA:58144"/>
        <dbReference type="Rhea" id="RHEA-COMP:10693"/>
        <dbReference type="Rhea" id="RHEA-COMP:10694"/>
        <dbReference type="ChEBI" id="CHEBI:30089"/>
        <dbReference type="ChEBI" id="CHEBI:30616"/>
        <dbReference type="ChEBI" id="CHEBI:33019"/>
        <dbReference type="ChEBI" id="CHEBI:74900"/>
        <dbReference type="ChEBI" id="CHEBI:82748"/>
        <dbReference type="ChEBI" id="CHEBI:456215"/>
    </reaction>
</comment>
<comment type="subcellular location">
    <subcellularLocation>
        <location evidence="1">Cytoplasm</location>
    </subcellularLocation>
</comment>
<comment type="similarity">
    <text evidence="1">Belongs to the TmcAL family.</text>
</comment>
<keyword id="KW-0067">ATP-binding</keyword>
<keyword id="KW-0963">Cytoplasm</keyword>
<keyword id="KW-0436">Ligase</keyword>
<keyword id="KW-0547">Nucleotide-binding</keyword>
<keyword id="KW-1185">Reference proteome</keyword>
<keyword id="KW-0694">RNA-binding</keyword>
<keyword id="KW-0819">tRNA processing</keyword>
<keyword id="KW-0820">tRNA-binding</keyword>